<comment type="subcellular location">
    <subcellularLocation>
        <location evidence="1">Secreted</location>
    </subcellularLocation>
</comment>
<comment type="similarity">
    <text evidence="3">Belongs to the DEFL family.</text>
</comment>
<keyword id="KW-0929">Antimicrobial</keyword>
<keyword id="KW-1015">Disulfide bond</keyword>
<keyword id="KW-0295">Fungicide</keyword>
<keyword id="KW-0611">Plant defense</keyword>
<keyword id="KW-1185">Reference proteome</keyword>
<keyword id="KW-0964">Secreted</keyword>
<keyword id="KW-0732">Signal</keyword>
<sequence length="87" mass="9449">MTTKMVSSHRLLTLMVFALLLIPMISGQSSKCTKGCTSTPECNIKCMKKGGGHCQAYIGRSHGRLAIENYCCCNNYSNSPISSPVMN</sequence>
<evidence type="ECO:0000250" key="1"/>
<evidence type="ECO:0000255" key="2"/>
<evidence type="ECO:0000305" key="3"/>
<accession>Q2V2Y3</accession>
<protein>
    <recommendedName>
        <fullName>Putative defensin-like protein 84</fullName>
    </recommendedName>
</protein>
<feature type="signal peptide" evidence="2">
    <location>
        <begin position="1"/>
        <end position="27"/>
    </location>
</feature>
<feature type="chain" id="PRO_0000379653" description="Putative defensin-like protein 84">
    <location>
        <begin position="28"/>
        <end position="87"/>
    </location>
</feature>
<feature type="disulfide bond" evidence="1">
    <location>
        <begin position="32"/>
        <end position="73"/>
    </location>
</feature>
<feature type="disulfide bond" evidence="1">
    <location>
        <begin position="36"/>
        <end position="54"/>
    </location>
</feature>
<feature type="disulfide bond" evidence="1">
    <location>
        <begin position="42"/>
        <end position="71"/>
    </location>
</feature>
<feature type="disulfide bond" evidence="1">
    <location>
        <begin position="46"/>
        <end position="72"/>
    </location>
</feature>
<name>DEF84_ARATH</name>
<proteinExistence type="inferred from homology"/>
<gene>
    <name type="ordered locus">At5g55131</name>
    <name type="ORF">MCO15</name>
</gene>
<organism>
    <name type="scientific">Arabidopsis thaliana</name>
    <name type="common">Mouse-ear cress</name>
    <dbReference type="NCBI Taxonomy" id="3702"/>
    <lineage>
        <taxon>Eukaryota</taxon>
        <taxon>Viridiplantae</taxon>
        <taxon>Streptophyta</taxon>
        <taxon>Embryophyta</taxon>
        <taxon>Tracheophyta</taxon>
        <taxon>Spermatophyta</taxon>
        <taxon>Magnoliopsida</taxon>
        <taxon>eudicotyledons</taxon>
        <taxon>Gunneridae</taxon>
        <taxon>Pentapetalae</taxon>
        <taxon>rosids</taxon>
        <taxon>malvids</taxon>
        <taxon>Brassicales</taxon>
        <taxon>Brassicaceae</taxon>
        <taxon>Camelineae</taxon>
        <taxon>Arabidopsis</taxon>
    </lineage>
</organism>
<reference key="1">
    <citation type="journal article" date="1998" name="DNA Res.">
        <title>Structural analysis of Arabidopsis thaliana chromosome 5. IV. Sequence features of the regions of 1,456,315 bp covered by nineteen physically assigned P1 and TAC clones.</title>
        <authorList>
            <person name="Sato S."/>
            <person name="Kaneko T."/>
            <person name="Kotani H."/>
            <person name="Nakamura Y."/>
            <person name="Asamizu E."/>
            <person name="Miyajima N."/>
            <person name="Tabata S."/>
        </authorList>
    </citation>
    <scope>NUCLEOTIDE SEQUENCE [LARGE SCALE GENOMIC DNA]</scope>
    <source>
        <strain>cv. Columbia</strain>
    </source>
</reference>
<reference key="2">
    <citation type="journal article" date="2017" name="Plant J.">
        <title>Araport11: a complete reannotation of the Arabidopsis thaliana reference genome.</title>
        <authorList>
            <person name="Cheng C.Y."/>
            <person name="Krishnakumar V."/>
            <person name="Chan A.P."/>
            <person name="Thibaud-Nissen F."/>
            <person name="Schobel S."/>
            <person name="Town C.D."/>
        </authorList>
    </citation>
    <scope>GENOME REANNOTATION</scope>
    <source>
        <strain>cv. Columbia</strain>
    </source>
</reference>
<reference key="3">
    <citation type="journal article" date="2005" name="Plant Physiol.">
        <title>Genome organization of more than 300 defensin-like genes in Arabidopsis.</title>
        <authorList>
            <person name="Silverstein K.A.T."/>
            <person name="Graham M.A."/>
            <person name="Paape T.D."/>
            <person name="VandenBosch K.A."/>
        </authorList>
    </citation>
    <scope>GENE FAMILY</scope>
</reference>
<dbReference type="EMBL" id="AB010071">
    <property type="status" value="NOT_ANNOTATED_CDS"/>
    <property type="molecule type" value="Genomic_DNA"/>
</dbReference>
<dbReference type="EMBL" id="CP002688">
    <property type="protein sequence ID" value="AED96588.1"/>
    <property type="molecule type" value="Genomic_DNA"/>
</dbReference>
<dbReference type="RefSeq" id="NP_001032077.1">
    <property type="nucleotide sequence ID" value="NM_001037000.1"/>
</dbReference>
<dbReference type="PaxDb" id="3702-AT5G55131.1"/>
<dbReference type="ProteomicsDB" id="224223"/>
<dbReference type="EnsemblPlants" id="AT5G55131.1">
    <property type="protein sequence ID" value="AT5G55131.1"/>
    <property type="gene ID" value="AT5G55131"/>
</dbReference>
<dbReference type="GeneID" id="3771513"/>
<dbReference type="Gramene" id="AT5G55131.1">
    <property type="protein sequence ID" value="AT5G55131.1"/>
    <property type="gene ID" value="AT5G55131"/>
</dbReference>
<dbReference type="KEGG" id="ath:AT5G55131"/>
<dbReference type="Araport" id="AT5G55131"/>
<dbReference type="TAIR" id="AT5G55131"/>
<dbReference type="HOGENOM" id="CLU_180308_0_0_1"/>
<dbReference type="InParanoid" id="Q2V2Y3"/>
<dbReference type="OrthoDB" id="10305256at2759"/>
<dbReference type="PhylomeDB" id="Q2V2Y3"/>
<dbReference type="PRO" id="PR:Q2V2Y3"/>
<dbReference type="Proteomes" id="UP000006548">
    <property type="component" value="Chromosome 5"/>
</dbReference>
<dbReference type="ExpressionAtlas" id="Q2V2Y3">
    <property type="expression patterns" value="baseline"/>
</dbReference>
<dbReference type="GO" id="GO:0005576">
    <property type="term" value="C:extracellular region"/>
    <property type="evidence" value="ECO:0007669"/>
    <property type="project" value="UniProtKB-SubCell"/>
</dbReference>
<dbReference type="GO" id="GO:0050832">
    <property type="term" value="P:defense response to fungus"/>
    <property type="evidence" value="ECO:0007669"/>
    <property type="project" value="UniProtKB-KW"/>
</dbReference>
<dbReference type="GO" id="GO:0031640">
    <property type="term" value="P:killing of cells of another organism"/>
    <property type="evidence" value="ECO:0007669"/>
    <property type="project" value="UniProtKB-KW"/>
</dbReference>